<organism>
    <name type="scientific">Rhizobium johnstonii (strain DSM 114642 / LMG 32736 / 3841)</name>
    <name type="common">Rhizobium leguminosarum bv. viciae</name>
    <dbReference type="NCBI Taxonomy" id="216596"/>
    <lineage>
        <taxon>Bacteria</taxon>
        <taxon>Pseudomonadati</taxon>
        <taxon>Pseudomonadota</taxon>
        <taxon>Alphaproteobacteria</taxon>
        <taxon>Hyphomicrobiales</taxon>
        <taxon>Rhizobiaceae</taxon>
        <taxon>Rhizobium/Agrobacterium group</taxon>
        <taxon>Rhizobium</taxon>
        <taxon>Rhizobium johnstonii</taxon>
    </lineage>
</organism>
<keyword id="KW-0067">ATP-binding</keyword>
<keyword id="KW-0997">Cell inner membrane</keyword>
<keyword id="KW-1003">Cell membrane</keyword>
<keyword id="KW-0472">Membrane</keyword>
<keyword id="KW-0547">Nucleotide-binding</keyword>
<keyword id="KW-0762">Sugar transport</keyword>
<keyword id="KW-1278">Translocase</keyword>
<keyword id="KW-0813">Transport</keyword>
<dbReference type="EC" id="7.6.2.10" evidence="1"/>
<dbReference type="EMBL" id="AM236080">
    <property type="protein sequence ID" value="CAK09294.1"/>
    <property type="molecule type" value="Genomic_DNA"/>
</dbReference>
<dbReference type="RefSeq" id="WP_011653245.1">
    <property type="nucleotide sequence ID" value="NC_008380.1"/>
</dbReference>
<dbReference type="SMR" id="Q1MCN6"/>
<dbReference type="EnsemblBacteria" id="CAK09294">
    <property type="protein sequence ID" value="CAK09294"/>
    <property type="gene ID" value="RL3804"/>
</dbReference>
<dbReference type="KEGG" id="rle:RL3804"/>
<dbReference type="eggNOG" id="COG3842">
    <property type="taxonomic scope" value="Bacteria"/>
</dbReference>
<dbReference type="HOGENOM" id="CLU_000604_1_1_5"/>
<dbReference type="Proteomes" id="UP000006575">
    <property type="component" value="Chromosome"/>
</dbReference>
<dbReference type="GO" id="GO:0055052">
    <property type="term" value="C:ATP-binding cassette (ABC) transporter complex, substrate-binding subunit-containing"/>
    <property type="evidence" value="ECO:0007669"/>
    <property type="project" value="TreeGrafter"/>
</dbReference>
<dbReference type="GO" id="GO:0015430">
    <property type="term" value="F:ABC-type glycerol-3-phosphate transporter activity"/>
    <property type="evidence" value="ECO:0007669"/>
    <property type="project" value="UniProtKB-EC"/>
</dbReference>
<dbReference type="GO" id="GO:0005524">
    <property type="term" value="F:ATP binding"/>
    <property type="evidence" value="ECO:0007669"/>
    <property type="project" value="UniProtKB-KW"/>
</dbReference>
<dbReference type="GO" id="GO:0016887">
    <property type="term" value="F:ATP hydrolysis activity"/>
    <property type="evidence" value="ECO:0007669"/>
    <property type="project" value="InterPro"/>
</dbReference>
<dbReference type="GO" id="GO:0008643">
    <property type="term" value="P:carbohydrate transport"/>
    <property type="evidence" value="ECO:0007669"/>
    <property type="project" value="InterPro"/>
</dbReference>
<dbReference type="GO" id="GO:0001407">
    <property type="term" value="P:glycerophosphodiester transmembrane transport"/>
    <property type="evidence" value="ECO:0007669"/>
    <property type="project" value="TreeGrafter"/>
</dbReference>
<dbReference type="CDD" id="cd03301">
    <property type="entry name" value="ABC_MalK_N"/>
    <property type="match status" value="1"/>
</dbReference>
<dbReference type="FunFam" id="3.40.50.300:FF:000042">
    <property type="entry name" value="Maltose/maltodextrin ABC transporter, ATP-binding protein"/>
    <property type="match status" value="1"/>
</dbReference>
<dbReference type="Gene3D" id="2.40.50.100">
    <property type="match status" value="1"/>
</dbReference>
<dbReference type="Gene3D" id="2.40.50.140">
    <property type="entry name" value="Nucleic acid-binding proteins"/>
    <property type="match status" value="1"/>
</dbReference>
<dbReference type="Gene3D" id="3.40.50.300">
    <property type="entry name" value="P-loop containing nucleotide triphosphate hydrolases"/>
    <property type="match status" value="1"/>
</dbReference>
<dbReference type="InterPro" id="IPR003593">
    <property type="entry name" value="AAA+_ATPase"/>
</dbReference>
<dbReference type="InterPro" id="IPR003439">
    <property type="entry name" value="ABC_transporter-like_ATP-bd"/>
</dbReference>
<dbReference type="InterPro" id="IPR017871">
    <property type="entry name" value="ABC_transporter-like_CS"/>
</dbReference>
<dbReference type="InterPro" id="IPR015855">
    <property type="entry name" value="ABC_transpr_MalK-like"/>
</dbReference>
<dbReference type="InterPro" id="IPR047641">
    <property type="entry name" value="ABC_transpr_MalK/UgpC-like"/>
</dbReference>
<dbReference type="InterPro" id="IPR008995">
    <property type="entry name" value="Mo/tungstate-bd_C_term_dom"/>
</dbReference>
<dbReference type="InterPro" id="IPR012340">
    <property type="entry name" value="NA-bd_OB-fold"/>
</dbReference>
<dbReference type="InterPro" id="IPR040582">
    <property type="entry name" value="OB_MalK-like"/>
</dbReference>
<dbReference type="InterPro" id="IPR027417">
    <property type="entry name" value="P-loop_NTPase"/>
</dbReference>
<dbReference type="NCBIfam" id="NF008653">
    <property type="entry name" value="PRK11650.1"/>
    <property type="match status" value="1"/>
</dbReference>
<dbReference type="PANTHER" id="PTHR43875">
    <property type="entry name" value="MALTODEXTRIN IMPORT ATP-BINDING PROTEIN MSMX"/>
    <property type="match status" value="1"/>
</dbReference>
<dbReference type="PANTHER" id="PTHR43875:SF12">
    <property type="entry name" value="SN-GLYCEROL-3-PHOSPHATE IMPORT ATP-BINDING PROTEIN UGPC"/>
    <property type="match status" value="1"/>
</dbReference>
<dbReference type="Pfam" id="PF00005">
    <property type="entry name" value="ABC_tran"/>
    <property type="match status" value="1"/>
</dbReference>
<dbReference type="Pfam" id="PF17912">
    <property type="entry name" value="OB_MalK"/>
    <property type="match status" value="1"/>
</dbReference>
<dbReference type="SMART" id="SM00382">
    <property type="entry name" value="AAA"/>
    <property type="match status" value="1"/>
</dbReference>
<dbReference type="SUPFAM" id="SSF50331">
    <property type="entry name" value="MOP-like"/>
    <property type="match status" value="1"/>
</dbReference>
<dbReference type="SUPFAM" id="SSF52540">
    <property type="entry name" value="P-loop containing nucleoside triphosphate hydrolases"/>
    <property type="match status" value="1"/>
</dbReference>
<dbReference type="PROSITE" id="PS00211">
    <property type="entry name" value="ABC_TRANSPORTER_1"/>
    <property type="match status" value="1"/>
</dbReference>
<dbReference type="PROSITE" id="PS50893">
    <property type="entry name" value="ABC_TRANSPORTER_2"/>
    <property type="match status" value="1"/>
</dbReference>
<dbReference type="PROSITE" id="PS51315">
    <property type="entry name" value="UGPC"/>
    <property type="match status" value="1"/>
</dbReference>
<feature type="chain" id="PRO_0000289765" description="sn-glycerol-3-phosphate import ATP-binding protein UgpC 1">
    <location>
        <begin position="1"/>
        <end position="369"/>
    </location>
</feature>
<feature type="domain" description="ABC transporter" evidence="1">
    <location>
        <begin position="4"/>
        <end position="234"/>
    </location>
</feature>
<feature type="binding site" evidence="1">
    <location>
        <begin position="36"/>
        <end position="43"/>
    </location>
    <ligand>
        <name>ATP</name>
        <dbReference type="ChEBI" id="CHEBI:30616"/>
    </ligand>
</feature>
<comment type="function">
    <text evidence="1">Part of the ABC transporter complex UgpBAEC involved in sn-glycerol-3-phosphate (G3P) import. Responsible for energy coupling to the transport system.</text>
</comment>
<comment type="catalytic activity">
    <reaction evidence="1">
        <text>sn-glycerol 3-phosphate(out) + ATP + H2O = sn-glycerol 3-phosphate(in) + ADP + phosphate + H(+)</text>
        <dbReference type="Rhea" id="RHEA:21668"/>
        <dbReference type="ChEBI" id="CHEBI:15377"/>
        <dbReference type="ChEBI" id="CHEBI:15378"/>
        <dbReference type="ChEBI" id="CHEBI:30616"/>
        <dbReference type="ChEBI" id="CHEBI:43474"/>
        <dbReference type="ChEBI" id="CHEBI:57597"/>
        <dbReference type="ChEBI" id="CHEBI:456216"/>
        <dbReference type="EC" id="7.6.2.10"/>
    </reaction>
</comment>
<comment type="subunit">
    <text evidence="1">The complex is composed of two ATP-binding proteins (UgpC), two transmembrane proteins (UgpA and UgpE) and a solute-binding protein (UgpB).</text>
</comment>
<comment type="subcellular location">
    <subcellularLocation>
        <location evidence="1">Cell inner membrane</location>
        <topology evidence="1">Peripheral membrane protein</topology>
    </subcellularLocation>
</comment>
<comment type="similarity">
    <text evidence="1">Belongs to the ABC transporter superfamily. sn-glycerol-3-phosphate importer (TC 3.A.1.1.3) family.</text>
</comment>
<gene>
    <name evidence="1" type="primary">ugpC1</name>
    <name type="ordered locus">RL3804</name>
</gene>
<evidence type="ECO:0000255" key="1">
    <source>
        <dbReference type="HAMAP-Rule" id="MF_01727"/>
    </source>
</evidence>
<proteinExistence type="inferred from homology"/>
<accession>Q1MCN6</accession>
<name>UGPC1_RHIJ3</name>
<reference key="1">
    <citation type="journal article" date="2006" name="Genome Biol.">
        <title>The genome of Rhizobium leguminosarum has recognizable core and accessory components.</title>
        <authorList>
            <person name="Young J.P.W."/>
            <person name="Crossman L.C."/>
            <person name="Johnston A.W.B."/>
            <person name="Thomson N.R."/>
            <person name="Ghazoui Z.F."/>
            <person name="Hull K.H."/>
            <person name="Wexler M."/>
            <person name="Curson A.R.J."/>
            <person name="Todd J.D."/>
            <person name="Poole P.S."/>
            <person name="Mauchline T.H."/>
            <person name="East A.K."/>
            <person name="Quail M.A."/>
            <person name="Churcher C."/>
            <person name="Arrowsmith C."/>
            <person name="Cherevach I."/>
            <person name="Chillingworth T."/>
            <person name="Clarke K."/>
            <person name="Cronin A."/>
            <person name="Davis P."/>
            <person name="Fraser A."/>
            <person name="Hance Z."/>
            <person name="Hauser H."/>
            <person name="Jagels K."/>
            <person name="Moule S."/>
            <person name="Mungall K."/>
            <person name="Norbertczak H."/>
            <person name="Rabbinowitsch E."/>
            <person name="Sanders M."/>
            <person name="Simmonds M."/>
            <person name="Whitehead S."/>
            <person name="Parkhill J."/>
        </authorList>
    </citation>
    <scope>NUCLEOTIDE SEQUENCE [LARGE SCALE GENOMIC DNA]</scope>
    <source>
        <strain>DSM 114642 / LMG 32736 / 3841</strain>
    </source>
</reference>
<sequence length="369" mass="39959">MAPISIRGVKKNYGKTPVVHGVDLDIQSGEFIVILGPSGCGKSTLLRMIAGLEEITGGEIAIDGRVVNQLEPRERGCAMVFQNYALYPHMSVAENIGYALKVAGVSKAERQRRIGEVAKALSLEPFLERRPAALSGGQRQRVAMGRAMIREPKVFLFDEPLSNLDAKLRIAMRAEIRRLHRRLGATSIFVTHDQTEAMTLADRLVVMNGGRVEQVGTPEEVYHHPVSRFVAGFVGTPAMNLLEGTINDEGVFVYDQSRKVALPRERAAPLKGKRVVLGMRAEAARLVAPDAPGALTATADFIEELGASRIVHADFDGLPFAVALTEAVKVKSGDPIGIAIDYDQIHLYAADTGRIIENPVMNNAGAVHA</sequence>
<protein>
    <recommendedName>
        <fullName evidence="1">sn-glycerol-3-phosphate import ATP-binding protein UgpC 1</fullName>
        <ecNumber evidence="1">7.6.2.10</ecNumber>
    </recommendedName>
</protein>